<accession>Q48754</accession>
<reference key="1">
    <citation type="journal article" date="2001" name="Science">
        <title>Comparative genomics of Listeria species.</title>
        <authorList>
            <person name="Glaser P."/>
            <person name="Frangeul L."/>
            <person name="Buchrieser C."/>
            <person name="Rusniok C."/>
            <person name="Amend A."/>
            <person name="Baquero F."/>
            <person name="Berche P."/>
            <person name="Bloecker H."/>
            <person name="Brandt P."/>
            <person name="Chakraborty T."/>
            <person name="Charbit A."/>
            <person name="Chetouani F."/>
            <person name="Couve E."/>
            <person name="de Daruvar A."/>
            <person name="Dehoux P."/>
            <person name="Domann E."/>
            <person name="Dominguez-Bernal G."/>
            <person name="Duchaud E."/>
            <person name="Durant L."/>
            <person name="Dussurget O."/>
            <person name="Entian K.-D."/>
            <person name="Fsihi H."/>
            <person name="Garcia-del Portillo F."/>
            <person name="Garrido P."/>
            <person name="Gautier L."/>
            <person name="Goebel W."/>
            <person name="Gomez-Lopez N."/>
            <person name="Hain T."/>
            <person name="Hauf J."/>
            <person name="Jackson D."/>
            <person name="Jones L.-M."/>
            <person name="Kaerst U."/>
            <person name="Kreft J."/>
            <person name="Kuhn M."/>
            <person name="Kunst F."/>
            <person name="Kurapkat G."/>
            <person name="Madueno E."/>
            <person name="Maitournam A."/>
            <person name="Mata Vicente J."/>
            <person name="Ng E."/>
            <person name="Nedjari H."/>
            <person name="Nordsiek G."/>
            <person name="Novella S."/>
            <person name="de Pablos B."/>
            <person name="Perez-Diaz J.-C."/>
            <person name="Purcell R."/>
            <person name="Remmel B."/>
            <person name="Rose M."/>
            <person name="Schlueter T."/>
            <person name="Simoes N."/>
            <person name="Tierrez A."/>
            <person name="Vazquez-Boland J.-A."/>
            <person name="Voss H."/>
            <person name="Wehland J."/>
            <person name="Cossart P."/>
        </authorList>
    </citation>
    <scope>NUCLEOTIDE SEQUENCE [LARGE SCALE GENOMIC DNA]</scope>
    <source>
        <strain>ATCC BAA-679 / EGD-e</strain>
    </source>
</reference>
<reference key="2">
    <citation type="journal article" date="1995" name="J. Exp. Med.">
        <title>Identification of a CD4+ T cell-stimulating antigen of pathogenic bacteria by expression cloning.</title>
        <authorList>
            <person name="Sanderson S."/>
            <person name="Campbell D.J."/>
            <person name="Shastri N."/>
        </authorList>
    </citation>
    <scope>NUCLEOTIDE SEQUENCE [GENOMIC DNA] OF 1-252</scope>
    <source>
        <strain>85EO-1167</strain>
    </source>
</reference>
<protein>
    <recommendedName>
        <fullName>CD4+ T-cell-stimulating antigen</fullName>
    </recommendedName>
</protein>
<organism>
    <name type="scientific">Listeria monocytogenes serovar 1/2a (strain ATCC BAA-679 / EGD-e)</name>
    <dbReference type="NCBI Taxonomy" id="169963"/>
    <lineage>
        <taxon>Bacteria</taxon>
        <taxon>Bacillati</taxon>
        <taxon>Bacillota</taxon>
        <taxon>Bacilli</taxon>
        <taxon>Bacillales</taxon>
        <taxon>Listeriaceae</taxon>
        <taxon>Listeria</taxon>
    </lineage>
</organism>
<proteinExistence type="inferred from homology"/>
<keyword id="KW-1003">Cell membrane</keyword>
<keyword id="KW-0449">Lipoprotein</keyword>
<keyword id="KW-0472">Membrane</keyword>
<keyword id="KW-0564">Palmitate</keyword>
<keyword id="KW-1185">Reference proteome</keyword>
<keyword id="KW-0732">Signal</keyword>
<sequence length="357" mass="38415">MKKRTFALALSMIIASGVILGACGSSSDDKKSSDDKSSKDFTVAMVTDTGGVDDRSFNQSAWEGLQKFGKANDMEKGTDGYNYLQSASEADYKTNLNTAVRSDYDLIYGIGYKLKDAIEEVSKQKPKNQFAIVDDTIDDRDNVVSIGFKDNDGSYLVGVVAGLTTKTNKVGFVGGVKGTVIDRFEAGFTAGVKAVNPNAQIDVQYANDFAKADKGQQIASSMYSSGVDVIFHAAGGTGNGVFAEAKNLKKKDPSRAVWVIGVDRDQWDEGKVTANDGKDYNVTLTSEIKRVDIAVEDLATRAKAGDFPGGTKIEYGLDKDAVGLSEHQDNISKDVLAKVEEYKQKIVDGDIKVPEKP</sequence>
<evidence type="ECO:0000305" key="1"/>
<name>TCSA_LISMO</name>
<comment type="subcellular location">
    <subcellularLocation>
        <location evidence="1">Cell membrane</location>
        <topology evidence="1">Lipid-anchor</topology>
    </subcellularLocation>
</comment>
<comment type="similarity">
    <text evidence="1">Belongs to the BMP lipoprotein family.</text>
</comment>
<feature type="signal peptide" evidence="1">
    <location>
        <begin position="1"/>
        <end position="22"/>
    </location>
</feature>
<feature type="chain" id="PRO_0000018006" description="CD4+ T-cell-stimulating antigen">
    <location>
        <begin position="23"/>
        <end position="357"/>
    </location>
</feature>
<feature type="lipid moiety-binding region" description="N-palmitoyl cysteine" evidence="1">
    <location>
        <position position="23"/>
    </location>
</feature>
<feature type="lipid moiety-binding region" description="S-diacylglycerol cysteine" evidence="1">
    <location>
        <position position="23"/>
    </location>
</feature>
<dbReference type="EMBL" id="AL591979">
    <property type="protein sequence ID" value="CAC99466.1"/>
    <property type="molecule type" value="Genomic_DNA"/>
</dbReference>
<dbReference type="EMBL" id="S80336">
    <property type="protein sequence ID" value="AAB35725.2"/>
    <property type="status" value="ALT_TERM"/>
    <property type="molecule type" value="Genomic_DNA"/>
</dbReference>
<dbReference type="PIR" id="AD1248">
    <property type="entry name" value="AD1248"/>
</dbReference>
<dbReference type="RefSeq" id="NP_464913.1">
    <property type="nucleotide sequence ID" value="NC_003210.1"/>
</dbReference>
<dbReference type="RefSeq" id="WP_003722514.1">
    <property type="nucleotide sequence ID" value="NZ_CP149495.1"/>
</dbReference>
<dbReference type="SMR" id="Q48754"/>
<dbReference type="STRING" id="169963.gene:17594045"/>
<dbReference type="PaxDb" id="169963-lmo1388"/>
<dbReference type="EnsemblBacteria" id="CAC99466">
    <property type="protein sequence ID" value="CAC99466"/>
    <property type="gene ID" value="CAC99466"/>
</dbReference>
<dbReference type="GeneID" id="984815"/>
<dbReference type="KEGG" id="lmo:lmo1388"/>
<dbReference type="PATRIC" id="fig|169963.11.peg.1426"/>
<dbReference type="eggNOG" id="COG1744">
    <property type="taxonomic scope" value="Bacteria"/>
</dbReference>
<dbReference type="HOGENOM" id="CLU_038813_0_0_9"/>
<dbReference type="OrthoDB" id="9784230at2"/>
<dbReference type="PhylomeDB" id="Q48754"/>
<dbReference type="BioCyc" id="LMON169963:LMO1388-MONOMER"/>
<dbReference type="Proteomes" id="UP000000817">
    <property type="component" value="Chromosome"/>
</dbReference>
<dbReference type="GO" id="GO:0005886">
    <property type="term" value="C:plasma membrane"/>
    <property type="evidence" value="ECO:0007669"/>
    <property type="project" value="UniProtKB-SubCell"/>
</dbReference>
<dbReference type="CDD" id="cd06354">
    <property type="entry name" value="PBP1_PrnA-like"/>
    <property type="match status" value="1"/>
</dbReference>
<dbReference type="Gene3D" id="3.40.50.2300">
    <property type="match status" value="2"/>
</dbReference>
<dbReference type="InterPro" id="IPR050957">
    <property type="entry name" value="BMP_lipoprotein"/>
</dbReference>
<dbReference type="InterPro" id="IPR028082">
    <property type="entry name" value="Peripla_BP_I"/>
</dbReference>
<dbReference type="InterPro" id="IPR003760">
    <property type="entry name" value="PnrA-like"/>
</dbReference>
<dbReference type="PANTHER" id="PTHR34296:SF2">
    <property type="entry name" value="ABC TRANSPORTER GUANOSINE-BINDING PROTEIN NUPN"/>
    <property type="match status" value="1"/>
</dbReference>
<dbReference type="PANTHER" id="PTHR34296">
    <property type="entry name" value="TRANSCRIPTIONAL ACTIVATOR PROTEIN MED"/>
    <property type="match status" value="1"/>
</dbReference>
<dbReference type="Pfam" id="PF02608">
    <property type="entry name" value="Bmp"/>
    <property type="match status" value="1"/>
</dbReference>
<dbReference type="SUPFAM" id="SSF53822">
    <property type="entry name" value="Periplasmic binding protein-like I"/>
    <property type="match status" value="1"/>
</dbReference>
<dbReference type="PROSITE" id="PS51257">
    <property type="entry name" value="PROKAR_LIPOPROTEIN"/>
    <property type="match status" value="1"/>
</dbReference>
<gene>
    <name type="primary">tcsA</name>
    <name type="ordered locus">lmo1388</name>
</gene>